<sequence>MRSTLRKDLIELFSQAGNEFISGQKISDALGCSRTAVWKHIEELRKEGYEVEAVRRKGYRLIKKPGKLSESEIRFGLKTEVMGQHLIYHDVLSSTQKTAHELANNNAPEGTLVVADKQTAGRGRMSRVWHSQEGNGVWMSLILRPDIPLQKTPQLTLLAAVAVVQGIEEAAGIQTDIKWPNDILINGKKTVGILTEMQAEEDRVRSVIIGIGINVNQQPNDFPDELKDIATSLSQAAGEKIDRAGVIQHILLCFEKRYRDYMTHGFTPIKLLWESYALGIGTNMRARTLNGTFYGKALGIDDEGVLLLETNEGIKKIYSADIELG</sequence>
<feature type="chain" id="PRO_0000064931" description="Bifunctional ligase/repressor BirA">
    <location>
        <begin position="1"/>
        <end position="325"/>
    </location>
</feature>
<feature type="domain" description="BPL/LPL catalytic" evidence="2">
    <location>
        <begin position="74"/>
        <end position="262"/>
    </location>
</feature>
<feature type="DNA-binding region" description="H-T-H motif" evidence="1">
    <location>
        <begin position="23"/>
        <end position="42"/>
    </location>
</feature>
<feature type="binding site" evidence="1">
    <location>
        <position position="118"/>
    </location>
    <ligand>
        <name>biotin</name>
        <dbReference type="ChEBI" id="CHEBI:57586"/>
    </ligand>
</feature>
<feature type="binding site" evidence="1">
    <location>
        <begin position="122"/>
        <end position="124"/>
    </location>
    <ligand>
        <name>biotin</name>
        <dbReference type="ChEBI" id="CHEBI:57586"/>
    </ligand>
</feature>
<feature type="binding site" evidence="1">
    <location>
        <position position="189"/>
    </location>
    <ligand>
        <name>biotin</name>
        <dbReference type="ChEBI" id="CHEBI:57586"/>
    </ligand>
</feature>
<feature type="mutagenesis site" description="Deregulation of biotin synthesis." evidence="3">
    <original>G</original>
    <variation>S</variation>
    <location>
        <position position="23"/>
    </location>
</feature>
<feature type="mutagenesis site" description="Deregulation of biotin synthesis." evidence="3">
    <original>W</original>
    <variation>R</variation>
    <location>
        <position position="38"/>
    </location>
</feature>
<feature type="mutagenesis site" description="Deregulation of biotin synthesis." evidence="3">
    <original>G</original>
    <variation>E</variation>
    <location>
        <position position="58"/>
    </location>
</feature>
<protein>
    <recommendedName>
        <fullName evidence="1">Bifunctional ligase/repressor BirA</fullName>
    </recommendedName>
    <alternativeName>
        <fullName evidence="1">Biotin--[acetyl-CoA-carboxylase] ligase</fullName>
        <ecNumber evidence="1">6.3.4.15</ecNumber>
    </alternativeName>
    <alternativeName>
        <fullName evidence="1">Biotin--protein ligase</fullName>
    </alternativeName>
    <alternativeName>
        <fullName evidence="1">Biotin-[acetyl-CoA carboxylase] synthetase</fullName>
    </alternativeName>
</protein>
<comment type="function">
    <text evidence="1">Acts both as a biotin--[acetyl-CoA-carboxylase] ligase and a repressor.</text>
</comment>
<comment type="catalytic activity">
    <reaction evidence="1">
        <text>biotin + L-lysyl-[protein] + ATP = N(6)-biotinyl-L-lysyl-[protein] + AMP + diphosphate + H(+)</text>
        <dbReference type="Rhea" id="RHEA:11756"/>
        <dbReference type="Rhea" id="RHEA-COMP:9752"/>
        <dbReference type="Rhea" id="RHEA-COMP:10505"/>
        <dbReference type="ChEBI" id="CHEBI:15378"/>
        <dbReference type="ChEBI" id="CHEBI:29969"/>
        <dbReference type="ChEBI" id="CHEBI:30616"/>
        <dbReference type="ChEBI" id="CHEBI:33019"/>
        <dbReference type="ChEBI" id="CHEBI:57586"/>
        <dbReference type="ChEBI" id="CHEBI:83144"/>
        <dbReference type="ChEBI" id="CHEBI:456215"/>
        <dbReference type="EC" id="6.3.4.15"/>
    </reaction>
</comment>
<comment type="similarity">
    <text evidence="1">Belongs to the biotin--protein ligase family.</text>
</comment>
<organism>
    <name type="scientific">Bacillus subtilis (strain 168)</name>
    <dbReference type="NCBI Taxonomy" id="224308"/>
    <lineage>
        <taxon>Bacteria</taxon>
        <taxon>Bacillati</taxon>
        <taxon>Bacillota</taxon>
        <taxon>Bacilli</taxon>
        <taxon>Bacillales</taxon>
        <taxon>Bacillaceae</taxon>
        <taxon>Bacillus</taxon>
    </lineage>
</organism>
<reference key="1">
    <citation type="journal article" date="1995" name="J. Bacteriol.">
        <title>Cloning and characterization of the Bacillus subtilis birA gene encoding a repressor of the biotin operon.</title>
        <authorList>
            <person name="Bower S."/>
            <person name="Perkins J.P."/>
            <person name="Yocum R.R."/>
            <person name="Serror P."/>
            <person name="Sorokin A.V."/>
            <person name="Rahaim P."/>
            <person name="Howitt C.L."/>
            <person name="Prasad N."/>
            <person name="Ehrlich S.D."/>
            <person name="Pero J."/>
        </authorList>
    </citation>
    <scope>NUCLEOTIDE SEQUENCE [GENOMIC DNA]</scope>
    <scope>MUTAGENESIS OF GLY-23; TRP-38 AND GLY-58</scope>
    <source>
        <strain>168 / Marburg / ATCC 6051 / DSM 10 / JCM 1465 / NBRC 13719 / NCIMB 3610 / NRRL NRS-744 / VKM B-501</strain>
    </source>
</reference>
<reference key="2">
    <citation type="journal article" date="1996" name="Microbiology">
        <title>Sequence analysis of the Bacillus subtilis chromosome region between the serA and kdg loci cloned in a yeast artificial chromosome.</title>
        <authorList>
            <person name="Sorokin A.V."/>
            <person name="Azevedo V."/>
            <person name="Zumstein E."/>
            <person name="Galleron N."/>
            <person name="Ehrlich S.D."/>
            <person name="Serror P."/>
        </authorList>
    </citation>
    <scope>NUCLEOTIDE SEQUENCE [GENOMIC DNA]</scope>
    <source>
        <strain>168 / Marburg / ATCC 6051 / DSM 10 / JCM 1465 / NBRC 13719 / NCIMB 3610 / NRRL NRS-744 / VKM B-501</strain>
    </source>
</reference>
<reference key="3">
    <citation type="journal article" date="1997" name="Nature">
        <title>The complete genome sequence of the Gram-positive bacterium Bacillus subtilis.</title>
        <authorList>
            <person name="Kunst F."/>
            <person name="Ogasawara N."/>
            <person name="Moszer I."/>
            <person name="Albertini A.M."/>
            <person name="Alloni G."/>
            <person name="Azevedo V."/>
            <person name="Bertero M.G."/>
            <person name="Bessieres P."/>
            <person name="Bolotin A."/>
            <person name="Borchert S."/>
            <person name="Borriss R."/>
            <person name="Boursier L."/>
            <person name="Brans A."/>
            <person name="Braun M."/>
            <person name="Brignell S.C."/>
            <person name="Bron S."/>
            <person name="Brouillet S."/>
            <person name="Bruschi C.V."/>
            <person name="Caldwell B."/>
            <person name="Capuano V."/>
            <person name="Carter N.M."/>
            <person name="Choi S.-K."/>
            <person name="Codani J.-J."/>
            <person name="Connerton I.F."/>
            <person name="Cummings N.J."/>
            <person name="Daniel R.A."/>
            <person name="Denizot F."/>
            <person name="Devine K.M."/>
            <person name="Duesterhoeft A."/>
            <person name="Ehrlich S.D."/>
            <person name="Emmerson P.T."/>
            <person name="Entian K.-D."/>
            <person name="Errington J."/>
            <person name="Fabret C."/>
            <person name="Ferrari E."/>
            <person name="Foulger D."/>
            <person name="Fritz C."/>
            <person name="Fujita M."/>
            <person name="Fujita Y."/>
            <person name="Fuma S."/>
            <person name="Galizzi A."/>
            <person name="Galleron N."/>
            <person name="Ghim S.-Y."/>
            <person name="Glaser P."/>
            <person name="Goffeau A."/>
            <person name="Golightly E.J."/>
            <person name="Grandi G."/>
            <person name="Guiseppi G."/>
            <person name="Guy B.J."/>
            <person name="Haga K."/>
            <person name="Haiech J."/>
            <person name="Harwood C.R."/>
            <person name="Henaut A."/>
            <person name="Hilbert H."/>
            <person name="Holsappel S."/>
            <person name="Hosono S."/>
            <person name="Hullo M.-F."/>
            <person name="Itaya M."/>
            <person name="Jones L.-M."/>
            <person name="Joris B."/>
            <person name="Karamata D."/>
            <person name="Kasahara Y."/>
            <person name="Klaerr-Blanchard M."/>
            <person name="Klein C."/>
            <person name="Kobayashi Y."/>
            <person name="Koetter P."/>
            <person name="Koningstein G."/>
            <person name="Krogh S."/>
            <person name="Kumano M."/>
            <person name="Kurita K."/>
            <person name="Lapidus A."/>
            <person name="Lardinois S."/>
            <person name="Lauber J."/>
            <person name="Lazarevic V."/>
            <person name="Lee S.-M."/>
            <person name="Levine A."/>
            <person name="Liu H."/>
            <person name="Masuda S."/>
            <person name="Mauel C."/>
            <person name="Medigue C."/>
            <person name="Medina N."/>
            <person name="Mellado R.P."/>
            <person name="Mizuno M."/>
            <person name="Moestl D."/>
            <person name="Nakai S."/>
            <person name="Noback M."/>
            <person name="Noone D."/>
            <person name="O'Reilly M."/>
            <person name="Ogawa K."/>
            <person name="Ogiwara A."/>
            <person name="Oudega B."/>
            <person name="Park S.-H."/>
            <person name="Parro V."/>
            <person name="Pohl T.M."/>
            <person name="Portetelle D."/>
            <person name="Porwollik S."/>
            <person name="Prescott A.M."/>
            <person name="Presecan E."/>
            <person name="Pujic P."/>
            <person name="Purnelle B."/>
            <person name="Rapoport G."/>
            <person name="Rey M."/>
            <person name="Reynolds S."/>
            <person name="Rieger M."/>
            <person name="Rivolta C."/>
            <person name="Rocha E."/>
            <person name="Roche B."/>
            <person name="Rose M."/>
            <person name="Sadaie Y."/>
            <person name="Sato T."/>
            <person name="Scanlan E."/>
            <person name="Schleich S."/>
            <person name="Schroeter R."/>
            <person name="Scoffone F."/>
            <person name="Sekiguchi J."/>
            <person name="Sekowska A."/>
            <person name="Seror S.J."/>
            <person name="Serror P."/>
            <person name="Shin B.-S."/>
            <person name="Soldo B."/>
            <person name="Sorokin A."/>
            <person name="Tacconi E."/>
            <person name="Takagi T."/>
            <person name="Takahashi H."/>
            <person name="Takemaru K."/>
            <person name="Takeuchi M."/>
            <person name="Tamakoshi A."/>
            <person name="Tanaka T."/>
            <person name="Terpstra P."/>
            <person name="Tognoni A."/>
            <person name="Tosato V."/>
            <person name="Uchiyama S."/>
            <person name="Vandenbol M."/>
            <person name="Vannier F."/>
            <person name="Vassarotti A."/>
            <person name="Viari A."/>
            <person name="Wambutt R."/>
            <person name="Wedler E."/>
            <person name="Wedler H."/>
            <person name="Weitzenegger T."/>
            <person name="Winters P."/>
            <person name="Wipat A."/>
            <person name="Yamamoto H."/>
            <person name="Yamane K."/>
            <person name="Yasumoto K."/>
            <person name="Yata K."/>
            <person name="Yoshida K."/>
            <person name="Yoshikawa H.-F."/>
            <person name="Zumstein E."/>
            <person name="Yoshikawa H."/>
            <person name="Danchin A."/>
        </authorList>
    </citation>
    <scope>NUCLEOTIDE SEQUENCE [LARGE SCALE GENOMIC DNA]</scope>
    <source>
        <strain>168</strain>
    </source>
</reference>
<proteinExistence type="evidence at protein level"/>
<dbReference type="EC" id="6.3.4.15" evidence="1"/>
<dbReference type="EMBL" id="L38424">
    <property type="protein sequence ID" value="AAA92879.1"/>
    <property type="status" value="ALT_SEQ"/>
    <property type="molecule type" value="Genomic_DNA"/>
</dbReference>
<dbReference type="EMBL" id="L47709">
    <property type="protein sequence ID" value="AAB38447.1"/>
    <property type="molecule type" value="Genomic_DNA"/>
</dbReference>
<dbReference type="EMBL" id="AL009126">
    <property type="protein sequence ID" value="CAB14160.1"/>
    <property type="molecule type" value="Genomic_DNA"/>
</dbReference>
<dbReference type="PIR" id="A69595">
    <property type="entry name" value="A69595"/>
</dbReference>
<dbReference type="RefSeq" id="NP_390125.1">
    <property type="nucleotide sequence ID" value="NC_000964.3"/>
</dbReference>
<dbReference type="RefSeq" id="WP_003230650.1">
    <property type="nucleotide sequence ID" value="NZ_OZ025638.1"/>
</dbReference>
<dbReference type="SMR" id="P0CI75"/>
<dbReference type="FunCoup" id="P0CI75">
    <property type="interactions" value="541"/>
</dbReference>
<dbReference type="STRING" id="224308.BSU22440"/>
<dbReference type="jPOST" id="P0CI75"/>
<dbReference type="PaxDb" id="224308-BSU22440"/>
<dbReference type="EnsemblBacteria" id="CAB14160">
    <property type="protein sequence ID" value="CAB14160"/>
    <property type="gene ID" value="BSU_22440"/>
</dbReference>
<dbReference type="GeneID" id="939028"/>
<dbReference type="KEGG" id="bsu:BSU22440"/>
<dbReference type="PATRIC" id="fig|224308.179.peg.2448"/>
<dbReference type="eggNOG" id="COG0340">
    <property type="taxonomic scope" value="Bacteria"/>
</dbReference>
<dbReference type="eggNOG" id="COG1654">
    <property type="taxonomic scope" value="Bacteria"/>
</dbReference>
<dbReference type="InParanoid" id="P0CI75"/>
<dbReference type="OrthoDB" id="9807064at2"/>
<dbReference type="PhylomeDB" id="P0CI75"/>
<dbReference type="BioCyc" id="BSUB:BSU22440-MONOMER"/>
<dbReference type="BRENDA" id="6.3.4.15">
    <property type="organism ID" value="658"/>
</dbReference>
<dbReference type="Proteomes" id="UP000001570">
    <property type="component" value="Chromosome"/>
</dbReference>
<dbReference type="GO" id="GO:0005737">
    <property type="term" value="C:cytoplasm"/>
    <property type="evidence" value="ECO:0000318"/>
    <property type="project" value="GO_Central"/>
</dbReference>
<dbReference type="GO" id="GO:0005524">
    <property type="term" value="F:ATP binding"/>
    <property type="evidence" value="ECO:0007669"/>
    <property type="project" value="UniProtKB-UniRule"/>
</dbReference>
<dbReference type="GO" id="GO:0004077">
    <property type="term" value="F:biotin--[biotin carboxyl-carrier protein] ligase activity"/>
    <property type="evidence" value="ECO:0000318"/>
    <property type="project" value="GO_Central"/>
</dbReference>
<dbReference type="GO" id="GO:0003677">
    <property type="term" value="F:DNA binding"/>
    <property type="evidence" value="ECO:0007669"/>
    <property type="project" value="UniProtKB-UniRule"/>
</dbReference>
<dbReference type="GO" id="GO:0016740">
    <property type="term" value="F:transferase activity"/>
    <property type="evidence" value="ECO:0007669"/>
    <property type="project" value="UniProtKB-ARBA"/>
</dbReference>
<dbReference type="GO" id="GO:0036211">
    <property type="term" value="P:protein modification process"/>
    <property type="evidence" value="ECO:0007669"/>
    <property type="project" value="InterPro"/>
</dbReference>
<dbReference type="GO" id="GO:0006355">
    <property type="term" value="P:regulation of DNA-templated transcription"/>
    <property type="evidence" value="ECO:0007669"/>
    <property type="project" value="UniProtKB-UniRule"/>
</dbReference>
<dbReference type="CDD" id="cd16442">
    <property type="entry name" value="BPL"/>
    <property type="match status" value="1"/>
</dbReference>
<dbReference type="Gene3D" id="2.30.30.100">
    <property type="match status" value="1"/>
</dbReference>
<dbReference type="Gene3D" id="3.30.930.10">
    <property type="entry name" value="Bira Bifunctional Protein, Domain 2"/>
    <property type="match status" value="1"/>
</dbReference>
<dbReference type="Gene3D" id="1.10.10.10">
    <property type="entry name" value="Winged helix-like DNA-binding domain superfamily/Winged helix DNA-binding domain"/>
    <property type="match status" value="1"/>
</dbReference>
<dbReference type="HAMAP" id="MF_00978">
    <property type="entry name" value="Bifunct_BirA"/>
    <property type="match status" value="1"/>
</dbReference>
<dbReference type="InterPro" id="IPR045864">
    <property type="entry name" value="aa-tRNA-synth_II/BPL/LPL"/>
</dbReference>
<dbReference type="InterPro" id="IPR030855">
    <property type="entry name" value="Bifunct_BirA"/>
</dbReference>
<dbReference type="InterPro" id="IPR004408">
    <property type="entry name" value="Biotin_CoA_COase_ligase"/>
</dbReference>
<dbReference type="InterPro" id="IPR004409">
    <property type="entry name" value="Biotin_operon_repress_HTH"/>
</dbReference>
<dbReference type="InterPro" id="IPR003142">
    <property type="entry name" value="BPL_C"/>
</dbReference>
<dbReference type="InterPro" id="IPR004143">
    <property type="entry name" value="BPL_LPL_catalytic"/>
</dbReference>
<dbReference type="InterPro" id="IPR013196">
    <property type="entry name" value="HTH_11"/>
</dbReference>
<dbReference type="InterPro" id="IPR008988">
    <property type="entry name" value="Transcriptional_repressor_C"/>
</dbReference>
<dbReference type="InterPro" id="IPR036388">
    <property type="entry name" value="WH-like_DNA-bd_sf"/>
</dbReference>
<dbReference type="InterPro" id="IPR036390">
    <property type="entry name" value="WH_DNA-bd_sf"/>
</dbReference>
<dbReference type="NCBIfam" id="TIGR00121">
    <property type="entry name" value="birA_ligase"/>
    <property type="match status" value="1"/>
</dbReference>
<dbReference type="NCBIfam" id="TIGR00122">
    <property type="entry name" value="birA_repr_reg"/>
    <property type="match status" value="1"/>
</dbReference>
<dbReference type="PANTHER" id="PTHR12835">
    <property type="entry name" value="BIOTIN PROTEIN LIGASE"/>
    <property type="match status" value="1"/>
</dbReference>
<dbReference type="PANTHER" id="PTHR12835:SF5">
    <property type="entry name" value="BIOTIN--PROTEIN LIGASE"/>
    <property type="match status" value="1"/>
</dbReference>
<dbReference type="Pfam" id="PF02237">
    <property type="entry name" value="BPL_C"/>
    <property type="match status" value="1"/>
</dbReference>
<dbReference type="Pfam" id="PF03099">
    <property type="entry name" value="BPL_LplA_LipB"/>
    <property type="match status" value="1"/>
</dbReference>
<dbReference type="Pfam" id="PF08279">
    <property type="entry name" value="HTH_11"/>
    <property type="match status" value="1"/>
</dbReference>
<dbReference type="SUPFAM" id="SSF50037">
    <property type="entry name" value="C-terminal domain of transcriptional repressors"/>
    <property type="match status" value="1"/>
</dbReference>
<dbReference type="SUPFAM" id="SSF55681">
    <property type="entry name" value="Class II aaRS and biotin synthetases"/>
    <property type="match status" value="1"/>
</dbReference>
<dbReference type="SUPFAM" id="SSF46785">
    <property type="entry name" value="Winged helix' DNA-binding domain"/>
    <property type="match status" value="1"/>
</dbReference>
<dbReference type="PROSITE" id="PS51733">
    <property type="entry name" value="BPL_LPL_CATALYTIC"/>
    <property type="match status" value="1"/>
</dbReference>
<keyword id="KW-0067">ATP-binding</keyword>
<keyword id="KW-0092">Biotin</keyword>
<keyword id="KW-0238">DNA-binding</keyword>
<keyword id="KW-0436">Ligase</keyword>
<keyword id="KW-0547">Nucleotide-binding</keyword>
<keyword id="KW-1185">Reference proteome</keyword>
<keyword id="KW-0678">Repressor</keyword>
<keyword id="KW-0804">Transcription</keyword>
<keyword id="KW-0805">Transcription regulation</keyword>
<name>BIRA_BACSU</name>
<gene>
    <name evidence="1" type="primary">birA</name>
    <name type="ordered locus">BSU22440</name>
</gene>
<accession>P0CI75</accession>
<accession>P42975</accession>
<evidence type="ECO:0000255" key="1">
    <source>
        <dbReference type="HAMAP-Rule" id="MF_00978"/>
    </source>
</evidence>
<evidence type="ECO:0000255" key="2">
    <source>
        <dbReference type="PROSITE-ProRule" id="PRU01067"/>
    </source>
</evidence>
<evidence type="ECO:0000269" key="3">
    <source>
    </source>
</evidence>